<reference key="1">
    <citation type="journal article" date="2002" name="Proc. Natl. Acad. Sci. U.S.A.">
        <title>Complete genome sequence of Clostridium perfringens, an anaerobic flesh-eater.</title>
        <authorList>
            <person name="Shimizu T."/>
            <person name="Ohtani K."/>
            <person name="Hirakawa H."/>
            <person name="Ohshima K."/>
            <person name="Yamashita A."/>
            <person name="Shiba T."/>
            <person name="Ogasawara N."/>
            <person name="Hattori M."/>
            <person name="Kuhara S."/>
            <person name="Hayashi H."/>
        </authorList>
    </citation>
    <scope>NUCLEOTIDE SEQUENCE [LARGE SCALE GENOMIC DNA]</scope>
    <source>
        <strain>13 / Type A</strain>
    </source>
</reference>
<comment type="similarity">
    <text evidence="1">Belongs to the bacterial ribosomal protein bL34 family.</text>
</comment>
<evidence type="ECO:0000255" key="1">
    <source>
        <dbReference type="HAMAP-Rule" id="MF_00391"/>
    </source>
</evidence>
<evidence type="ECO:0000256" key="2">
    <source>
        <dbReference type="SAM" id="MobiDB-lite"/>
    </source>
</evidence>
<evidence type="ECO:0000305" key="3"/>
<keyword id="KW-1185">Reference proteome</keyword>
<keyword id="KW-0687">Ribonucleoprotein</keyword>
<keyword id="KW-0689">Ribosomal protein</keyword>
<name>RL34_CLOPE</name>
<feature type="chain" id="PRO_0000187370" description="Large ribosomal subunit protein bL34">
    <location>
        <begin position="1"/>
        <end position="44"/>
    </location>
</feature>
<feature type="region of interest" description="Disordered" evidence="2">
    <location>
        <begin position="1"/>
        <end position="44"/>
    </location>
</feature>
<feature type="compositionally biased region" description="Basic residues" evidence="2">
    <location>
        <begin position="7"/>
        <end position="44"/>
    </location>
</feature>
<proteinExistence type="inferred from homology"/>
<sequence>MFMTYQPKKRQRSKEHGFRKRMKTKSGRNVLKRRRQKGRKRLTA</sequence>
<gene>
    <name evidence="1" type="primary">rpmH</name>
    <name type="ordered locus">CPE2660</name>
</gene>
<protein>
    <recommendedName>
        <fullName evidence="1">Large ribosomal subunit protein bL34</fullName>
    </recommendedName>
    <alternativeName>
        <fullName evidence="3">50S ribosomal protein L34</fullName>
    </alternativeName>
</protein>
<dbReference type="EMBL" id="BA000016">
    <property type="protein sequence ID" value="BAB82366.1"/>
    <property type="molecule type" value="Genomic_DNA"/>
</dbReference>
<dbReference type="RefSeq" id="WP_003451019.1">
    <property type="nucleotide sequence ID" value="NC_003366.1"/>
</dbReference>
<dbReference type="SMR" id="Q8XH25"/>
<dbReference type="STRING" id="195102.gene:10492004"/>
<dbReference type="GeneID" id="93000725"/>
<dbReference type="KEGG" id="cpe:CPE2660"/>
<dbReference type="HOGENOM" id="CLU_129938_2_0_9"/>
<dbReference type="Proteomes" id="UP000000818">
    <property type="component" value="Chromosome"/>
</dbReference>
<dbReference type="GO" id="GO:1990904">
    <property type="term" value="C:ribonucleoprotein complex"/>
    <property type="evidence" value="ECO:0007669"/>
    <property type="project" value="UniProtKB-KW"/>
</dbReference>
<dbReference type="GO" id="GO:0005840">
    <property type="term" value="C:ribosome"/>
    <property type="evidence" value="ECO:0007669"/>
    <property type="project" value="UniProtKB-KW"/>
</dbReference>
<dbReference type="GO" id="GO:0003735">
    <property type="term" value="F:structural constituent of ribosome"/>
    <property type="evidence" value="ECO:0007669"/>
    <property type="project" value="InterPro"/>
</dbReference>
<dbReference type="GO" id="GO:0006412">
    <property type="term" value="P:translation"/>
    <property type="evidence" value="ECO:0007669"/>
    <property type="project" value="UniProtKB-UniRule"/>
</dbReference>
<dbReference type="FunFam" id="1.10.287.3980:FF:000001">
    <property type="entry name" value="Mitochondrial ribosomal protein L34"/>
    <property type="match status" value="1"/>
</dbReference>
<dbReference type="Gene3D" id="1.10.287.3980">
    <property type="match status" value="1"/>
</dbReference>
<dbReference type="HAMAP" id="MF_00391">
    <property type="entry name" value="Ribosomal_bL34"/>
    <property type="match status" value="1"/>
</dbReference>
<dbReference type="InterPro" id="IPR000271">
    <property type="entry name" value="Ribosomal_bL34"/>
</dbReference>
<dbReference type="InterPro" id="IPR020939">
    <property type="entry name" value="Ribosomal_bL34_CS"/>
</dbReference>
<dbReference type="NCBIfam" id="TIGR01030">
    <property type="entry name" value="rpmH_bact"/>
    <property type="match status" value="1"/>
</dbReference>
<dbReference type="PANTHER" id="PTHR14503:SF4">
    <property type="entry name" value="LARGE RIBOSOMAL SUBUNIT PROTEIN BL34M"/>
    <property type="match status" value="1"/>
</dbReference>
<dbReference type="PANTHER" id="PTHR14503">
    <property type="entry name" value="MITOCHONDRIAL RIBOSOMAL PROTEIN 34 FAMILY MEMBER"/>
    <property type="match status" value="1"/>
</dbReference>
<dbReference type="Pfam" id="PF00468">
    <property type="entry name" value="Ribosomal_L34"/>
    <property type="match status" value="1"/>
</dbReference>
<dbReference type="PROSITE" id="PS00784">
    <property type="entry name" value="RIBOSOMAL_L34"/>
    <property type="match status" value="1"/>
</dbReference>
<accession>Q8XH25</accession>
<organism>
    <name type="scientific">Clostridium perfringens (strain 13 / Type A)</name>
    <dbReference type="NCBI Taxonomy" id="195102"/>
    <lineage>
        <taxon>Bacteria</taxon>
        <taxon>Bacillati</taxon>
        <taxon>Bacillota</taxon>
        <taxon>Clostridia</taxon>
        <taxon>Eubacteriales</taxon>
        <taxon>Clostridiaceae</taxon>
        <taxon>Clostridium</taxon>
    </lineage>
</organism>